<organism>
    <name type="scientific">Prochlorococcus marinus (strain SARG / CCMP1375 / SS120)</name>
    <dbReference type="NCBI Taxonomy" id="167539"/>
    <lineage>
        <taxon>Bacteria</taxon>
        <taxon>Bacillati</taxon>
        <taxon>Cyanobacteriota</taxon>
        <taxon>Cyanophyceae</taxon>
        <taxon>Synechococcales</taxon>
        <taxon>Prochlorococcaceae</taxon>
        <taxon>Prochlorococcus</taxon>
    </lineage>
</organism>
<keyword id="KW-0067">ATP-binding</keyword>
<keyword id="KW-0143">Chaperone</keyword>
<keyword id="KW-0547">Nucleotide-binding</keyword>
<keyword id="KW-0597">Phosphoprotein</keyword>
<keyword id="KW-1185">Reference proteome</keyword>
<keyword id="KW-0346">Stress response</keyword>
<name>DNAK1_PROMA</name>
<reference key="1">
    <citation type="journal article" date="2003" name="Proc. Natl. Acad. Sci. U.S.A.">
        <title>Genome sequence of the cyanobacterium Prochlorococcus marinus SS120, a nearly minimal oxyphototrophic genome.</title>
        <authorList>
            <person name="Dufresne A."/>
            <person name="Salanoubat M."/>
            <person name="Partensky F."/>
            <person name="Artiguenave F."/>
            <person name="Axmann I.M."/>
            <person name="Barbe V."/>
            <person name="Duprat S."/>
            <person name="Galperin M.Y."/>
            <person name="Koonin E.V."/>
            <person name="Le Gall F."/>
            <person name="Makarova K.S."/>
            <person name="Ostrowski M."/>
            <person name="Oztas S."/>
            <person name="Robert C."/>
            <person name="Rogozin I.B."/>
            <person name="Scanlan D.J."/>
            <person name="Tandeau de Marsac N."/>
            <person name="Weissenbach J."/>
            <person name="Wincker P."/>
            <person name="Wolf Y.I."/>
            <person name="Hess W.R."/>
        </authorList>
    </citation>
    <scope>NUCLEOTIDE SEQUENCE [LARGE SCALE GENOMIC DNA]</scope>
    <source>
        <strain>SARG / CCMP1375 / SS120</strain>
    </source>
</reference>
<sequence length="666" mass="73309">MGRIVGIDLGTTNSVIGVLEAGRPFVIANAEGSRTTPSVIGYTKESELVVGQQARRQLVLNPKNTFSNLKRYVGRSWDELEENSLNVAYTIRANNQGCVRVTCPITEREYAPEELIGSIIRKLIDDAEKYLSETIDSAVITVPAYFNDSQRQATKDAALLAGVRVERILNEPTAAALAYGFDKSSSSRVLVFDLGGGTFDISLLRISNGVFDVKATSGDTQLGGNDFDQKIVEWLANDFKKEHNIDLRRDRQSLQRLNEVAEKAKQELSGLNSTPISLPFIATGPNGPLHIETKLDRKTFESLCKDLIDRLLQPVEVALQDSGWTADDINDVVLVGGGTRMPMVQQLVKTIVPVTPSQSVNPDEVVAIGAAVQAGILTGELRDLLLNDVTPLSLGLETIGGLMKVLIPRNTPIPVRQADVFSTSEANQSSVEINVWQGERQLASDNKSLGKFRLSGIPPAPRGVPQVQVAFDIDANGMLQVSATDRTTGRKQSVSINGGSNLNEDEVNNLIEEAKDKADVDRRKRASIDQRNNALTLVAQAERRLRDVSLEFGPYGAERQQRAVEVSLRDVQDFLDSDDLAELDLAVSSLQEALFGLNRRISAEKRTDNNPIQGIKNTFGSLKDELFSDDYWDDDPWDYHPNNNRVGGGRDYGGRNLDRWDNDFYN</sequence>
<accession>Q7VC04</accession>
<dbReference type="EMBL" id="AE017126">
    <property type="protein sequence ID" value="AAP99982.1"/>
    <property type="molecule type" value="Genomic_DNA"/>
</dbReference>
<dbReference type="RefSeq" id="NP_875330.1">
    <property type="nucleotide sequence ID" value="NC_005042.1"/>
</dbReference>
<dbReference type="SMR" id="Q7VC04"/>
<dbReference type="STRING" id="167539.Pro_0938"/>
<dbReference type="EnsemblBacteria" id="AAP99982">
    <property type="protein sequence ID" value="AAP99982"/>
    <property type="gene ID" value="Pro_0938"/>
</dbReference>
<dbReference type="KEGG" id="pma:Pro_0938"/>
<dbReference type="PATRIC" id="fig|167539.5.peg.987"/>
<dbReference type="eggNOG" id="COG0443">
    <property type="taxonomic scope" value="Bacteria"/>
</dbReference>
<dbReference type="HOGENOM" id="CLU_005965_2_1_3"/>
<dbReference type="OrthoDB" id="9766019at2"/>
<dbReference type="Proteomes" id="UP000001420">
    <property type="component" value="Chromosome"/>
</dbReference>
<dbReference type="GO" id="GO:0005524">
    <property type="term" value="F:ATP binding"/>
    <property type="evidence" value="ECO:0007669"/>
    <property type="project" value="UniProtKB-UniRule"/>
</dbReference>
<dbReference type="GO" id="GO:0140662">
    <property type="term" value="F:ATP-dependent protein folding chaperone"/>
    <property type="evidence" value="ECO:0007669"/>
    <property type="project" value="InterPro"/>
</dbReference>
<dbReference type="GO" id="GO:0051082">
    <property type="term" value="F:unfolded protein binding"/>
    <property type="evidence" value="ECO:0007669"/>
    <property type="project" value="InterPro"/>
</dbReference>
<dbReference type="CDD" id="cd10234">
    <property type="entry name" value="ASKHA_NBD_HSP70_DnaK-like"/>
    <property type="match status" value="1"/>
</dbReference>
<dbReference type="FunFam" id="2.60.34.10:FF:000014">
    <property type="entry name" value="Chaperone protein DnaK HSP70"/>
    <property type="match status" value="1"/>
</dbReference>
<dbReference type="FunFam" id="3.30.420.40:FF:000004">
    <property type="entry name" value="Molecular chaperone DnaK"/>
    <property type="match status" value="1"/>
</dbReference>
<dbReference type="FunFam" id="3.90.640.10:FF:000003">
    <property type="entry name" value="Molecular chaperone DnaK"/>
    <property type="match status" value="1"/>
</dbReference>
<dbReference type="Gene3D" id="3.30.420.40">
    <property type="match status" value="2"/>
</dbReference>
<dbReference type="Gene3D" id="3.90.640.10">
    <property type="entry name" value="Actin, Chain A, domain 4"/>
    <property type="match status" value="1"/>
</dbReference>
<dbReference type="Gene3D" id="2.60.34.10">
    <property type="entry name" value="Substrate Binding Domain Of DNAk, Chain A, domain 1"/>
    <property type="match status" value="1"/>
</dbReference>
<dbReference type="HAMAP" id="MF_00332">
    <property type="entry name" value="DnaK"/>
    <property type="match status" value="1"/>
</dbReference>
<dbReference type="InterPro" id="IPR043129">
    <property type="entry name" value="ATPase_NBD"/>
</dbReference>
<dbReference type="InterPro" id="IPR012725">
    <property type="entry name" value="Chaperone_DnaK"/>
</dbReference>
<dbReference type="InterPro" id="IPR018181">
    <property type="entry name" value="Heat_shock_70_CS"/>
</dbReference>
<dbReference type="InterPro" id="IPR029047">
    <property type="entry name" value="HSP70_peptide-bd_sf"/>
</dbReference>
<dbReference type="InterPro" id="IPR013126">
    <property type="entry name" value="Hsp_70_fam"/>
</dbReference>
<dbReference type="NCBIfam" id="NF001413">
    <property type="entry name" value="PRK00290.1"/>
    <property type="match status" value="1"/>
</dbReference>
<dbReference type="NCBIfam" id="NF009946">
    <property type="entry name" value="PRK13410.1"/>
    <property type="match status" value="1"/>
</dbReference>
<dbReference type="PANTHER" id="PTHR19375">
    <property type="entry name" value="HEAT SHOCK PROTEIN 70KDA"/>
    <property type="match status" value="1"/>
</dbReference>
<dbReference type="Pfam" id="PF00012">
    <property type="entry name" value="HSP70"/>
    <property type="match status" value="1"/>
</dbReference>
<dbReference type="PRINTS" id="PR00301">
    <property type="entry name" value="HEATSHOCK70"/>
</dbReference>
<dbReference type="SUPFAM" id="SSF53067">
    <property type="entry name" value="Actin-like ATPase domain"/>
    <property type="match status" value="2"/>
</dbReference>
<dbReference type="SUPFAM" id="SSF100920">
    <property type="entry name" value="Heat shock protein 70kD (HSP70), peptide-binding domain"/>
    <property type="match status" value="1"/>
</dbReference>
<dbReference type="PROSITE" id="PS00297">
    <property type="entry name" value="HSP70_1"/>
    <property type="match status" value="1"/>
</dbReference>
<dbReference type="PROSITE" id="PS00329">
    <property type="entry name" value="HSP70_2"/>
    <property type="match status" value="1"/>
</dbReference>
<dbReference type="PROSITE" id="PS01036">
    <property type="entry name" value="HSP70_3"/>
    <property type="match status" value="1"/>
</dbReference>
<evidence type="ECO:0000250" key="1"/>
<evidence type="ECO:0000305" key="2"/>
<protein>
    <recommendedName>
        <fullName>Chaperone protein dnaK1</fullName>
    </recommendedName>
    <alternativeName>
        <fullName>HSP70-1</fullName>
    </alternativeName>
    <alternativeName>
        <fullName>Heat shock 70 kDa protein 1</fullName>
    </alternativeName>
    <alternativeName>
        <fullName>Heat shock protein 70-1</fullName>
    </alternativeName>
</protein>
<comment type="function">
    <text evidence="1">Acts as a chaperone.</text>
</comment>
<comment type="induction">
    <text evidence="1">By stress conditions e.g. heat shock (By similarity).</text>
</comment>
<comment type="similarity">
    <text evidence="2">Belongs to the heat shock protein 70 family.</text>
</comment>
<feature type="chain" id="PRO_0000078512" description="Chaperone protein dnaK1">
    <location>
        <begin position="1"/>
        <end position="666"/>
    </location>
</feature>
<feature type="modified residue" description="Phosphothreonine; by autocatalysis" evidence="1">
    <location>
        <position position="198"/>
    </location>
</feature>
<proteinExistence type="inferred from homology"/>
<gene>
    <name type="primary">dnaK1</name>
    <name type="ordered locus">Pro_0938</name>
</gene>